<gene>
    <name evidence="1" type="primary">leuS</name>
    <name type="ordered locus">Asuc_0743</name>
</gene>
<comment type="catalytic activity">
    <reaction evidence="1">
        <text>tRNA(Leu) + L-leucine + ATP = L-leucyl-tRNA(Leu) + AMP + diphosphate</text>
        <dbReference type="Rhea" id="RHEA:11688"/>
        <dbReference type="Rhea" id="RHEA-COMP:9613"/>
        <dbReference type="Rhea" id="RHEA-COMP:9622"/>
        <dbReference type="ChEBI" id="CHEBI:30616"/>
        <dbReference type="ChEBI" id="CHEBI:33019"/>
        <dbReference type="ChEBI" id="CHEBI:57427"/>
        <dbReference type="ChEBI" id="CHEBI:78442"/>
        <dbReference type="ChEBI" id="CHEBI:78494"/>
        <dbReference type="ChEBI" id="CHEBI:456215"/>
        <dbReference type="EC" id="6.1.1.4"/>
    </reaction>
</comment>
<comment type="subcellular location">
    <subcellularLocation>
        <location evidence="1">Cytoplasm</location>
    </subcellularLocation>
</comment>
<comment type="similarity">
    <text evidence="1">Belongs to the class-I aminoacyl-tRNA synthetase family.</text>
</comment>
<accession>A6VMB8</accession>
<evidence type="ECO:0000255" key="1">
    <source>
        <dbReference type="HAMAP-Rule" id="MF_00049"/>
    </source>
</evidence>
<sequence>MQEQYRPDLIEAEVQKYWQENKTFKAIKDTNKEKYYCLSMLPYPSGRLHMGHVRNYTIGDVVSRYQRMIGKNVLQPMGWDAFGLPAEGAAVKNNTAPAKWTYENIEYMKNQLKVLGFSYDWEREVTTCRPEYYKWEQWFFTELYKKGLVYKKTSVVNWCPNDETVLANEQVHEGCCWRCDTPVEQREIPQWFIKITDYAEQLLGGLDTLPEWPEMVKTMQRNWIGRSEGVEITFKIENSDETVAVYTTRPDTFYGVSYMAVAAGHPLAERAAQNNPDLAKFIQECKNTKVAEAELATMEKKGMATGLNAVHPITGKPVPIWVANFVLMHYGTGAVMAVPAHDQRDFEFATKYDLPINQVIAPVNGEDIDLSKAAFTEHGKLVNSAEFDGLDFDAAFNGIADKLERMGAGKRQVNYRLRDWGVSRQRYWGAPIPMLTLENGDVVPAPLQDLPIVLPEDVVMDGVKSPIKADPDWAKTTYNGRPALKETDTFDTFMESSWYYARYTCPQYHEGMLDSEEANYWLPVDQYIGGIEHATMHLLYFRFFHKLLRDAGLVSTDEPTKKLLCQGMVLADAFYYTSPTNERIWVSPTKVTLERDEKGRIVKALDDEGRELVHAGMTKMSKSKNNGIDPQEMVEKYGADTVRLFMMFASPAEMTLEWQESGVEGAKRFLGRLWNLVFEYNKNPAKTALNPTALSGVQKALRRGVHKTIAKVSDDIGRRQTFNTAIAAIMELMNKLTRASLAGEQDRAIMGEALSAVVRMLYPITPHVCFQLWKELGNEDVIDFAPWVQADEAAMVEEEKLVVVQVNGKVRGKITVPADMAEDDIKQAALADENVQKFLSGLNIVKTIYVPGKLFSFVAK</sequence>
<protein>
    <recommendedName>
        <fullName evidence="1">Leucine--tRNA ligase</fullName>
        <ecNumber evidence="1">6.1.1.4</ecNumber>
    </recommendedName>
    <alternativeName>
        <fullName evidence="1">Leucyl-tRNA synthetase</fullName>
        <shortName evidence="1">LeuRS</shortName>
    </alternativeName>
</protein>
<organism>
    <name type="scientific">Actinobacillus succinogenes (strain ATCC 55618 / DSM 22257 / CCUG 43843 / 130Z)</name>
    <dbReference type="NCBI Taxonomy" id="339671"/>
    <lineage>
        <taxon>Bacteria</taxon>
        <taxon>Pseudomonadati</taxon>
        <taxon>Pseudomonadota</taxon>
        <taxon>Gammaproteobacteria</taxon>
        <taxon>Pasteurellales</taxon>
        <taxon>Pasteurellaceae</taxon>
        <taxon>Actinobacillus</taxon>
    </lineage>
</organism>
<dbReference type="EC" id="6.1.1.4" evidence="1"/>
<dbReference type="EMBL" id="CP000746">
    <property type="protein sequence ID" value="ABR74115.1"/>
    <property type="molecule type" value="Genomic_DNA"/>
</dbReference>
<dbReference type="RefSeq" id="WP_012072494.1">
    <property type="nucleotide sequence ID" value="NC_009655.1"/>
</dbReference>
<dbReference type="SMR" id="A6VMB8"/>
<dbReference type="STRING" id="339671.Asuc_0743"/>
<dbReference type="KEGG" id="asu:Asuc_0743"/>
<dbReference type="eggNOG" id="COG0495">
    <property type="taxonomic scope" value="Bacteria"/>
</dbReference>
<dbReference type="HOGENOM" id="CLU_004427_0_0_6"/>
<dbReference type="OrthoDB" id="9810365at2"/>
<dbReference type="Proteomes" id="UP000001114">
    <property type="component" value="Chromosome"/>
</dbReference>
<dbReference type="GO" id="GO:0005829">
    <property type="term" value="C:cytosol"/>
    <property type="evidence" value="ECO:0007669"/>
    <property type="project" value="TreeGrafter"/>
</dbReference>
<dbReference type="GO" id="GO:0002161">
    <property type="term" value="F:aminoacyl-tRNA deacylase activity"/>
    <property type="evidence" value="ECO:0007669"/>
    <property type="project" value="InterPro"/>
</dbReference>
<dbReference type="GO" id="GO:0005524">
    <property type="term" value="F:ATP binding"/>
    <property type="evidence" value="ECO:0007669"/>
    <property type="project" value="UniProtKB-UniRule"/>
</dbReference>
<dbReference type="GO" id="GO:0004823">
    <property type="term" value="F:leucine-tRNA ligase activity"/>
    <property type="evidence" value="ECO:0007669"/>
    <property type="project" value="UniProtKB-UniRule"/>
</dbReference>
<dbReference type="GO" id="GO:0006429">
    <property type="term" value="P:leucyl-tRNA aminoacylation"/>
    <property type="evidence" value="ECO:0007669"/>
    <property type="project" value="UniProtKB-UniRule"/>
</dbReference>
<dbReference type="CDD" id="cd07958">
    <property type="entry name" value="Anticodon_Ia_Leu_BEm"/>
    <property type="match status" value="1"/>
</dbReference>
<dbReference type="CDD" id="cd00812">
    <property type="entry name" value="LeuRS_core"/>
    <property type="match status" value="1"/>
</dbReference>
<dbReference type="FunFam" id="1.10.730.10:FF:000002">
    <property type="entry name" value="Leucine--tRNA ligase"/>
    <property type="match status" value="1"/>
</dbReference>
<dbReference type="FunFam" id="2.20.28.290:FF:000001">
    <property type="entry name" value="Leucine--tRNA ligase"/>
    <property type="match status" value="1"/>
</dbReference>
<dbReference type="FunFam" id="3.10.20.590:FF:000001">
    <property type="entry name" value="Leucine--tRNA ligase"/>
    <property type="match status" value="1"/>
</dbReference>
<dbReference type="FunFam" id="3.40.50.620:FF:000003">
    <property type="entry name" value="Leucine--tRNA ligase"/>
    <property type="match status" value="1"/>
</dbReference>
<dbReference type="FunFam" id="3.40.50.620:FF:000051">
    <property type="entry name" value="Leucine--tRNA ligase"/>
    <property type="match status" value="1"/>
</dbReference>
<dbReference type="FunFam" id="3.90.740.10:FF:000012">
    <property type="entry name" value="Leucine--tRNA ligase"/>
    <property type="match status" value="1"/>
</dbReference>
<dbReference type="Gene3D" id="2.20.28.290">
    <property type="match status" value="1"/>
</dbReference>
<dbReference type="Gene3D" id="3.10.20.590">
    <property type="match status" value="1"/>
</dbReference>
<dbReference type="Gene3D" id="3.40.50.620">
    <property type="entry name" value="HUPs"/>
    <property type="match status" value="2"/>
</dbReference>
<dbReference type="Gene3D" id="1.10.730.10">
    <property type="entry name" value="Isoleucyl-tRNA Synthetase, Domain 1"/>
    <property type="match status" value="2"/>
</dbReference>
<dbReference type="HAMAP" id="MF_00049_B">
    <property type="entry name" value="Leu_tRNA_synth_B"/>
    <property type="match status" value="1"/>
</dbReference>
<dbReference type="InterPro" id="IPR001412">
    <property type="entry name" value="aa-tRNA-synth_I_CS"/>
</dbReference>
<dbReference type="InterPro" id="IPR002300">
    <property type="entry name" value="aa-tRNA-synth_Ia"/>
</dbReference>
<dbReference type="InterPro" id="IPR002302">
    <property type="entry name" value="Leu-tRNA-ligase"/>
</dbReference>
<dbReference type="InterPro" id="IPR025709">
    <property type="entry name" value="Leu_tRNA-synth_edit"/>
</dbReference>
<dbReference type="InterPro" id="IPR013155">
    <property type="entry name" value="M/V/L/I-tRNA-synth_anticd-bd"/>
</dbReference>
<dbReference type="InterPro" id="IPR015413">
    <property type="entry name" value="Methionyl/Leucyl_tRNA_Synth"/>
</dbReference>
<dbReference type="InterPro" id="IPR014729">
    <property type="entry name" value="Rossmann-like_a/b/a_fold"/>
</dbReference>
<dbReference type="InterPro" id="IPR009080">
    <property type="entry name" value="tRNAsynth_Ia_anticodon-bd"/>
</dbReference>
<dbReference type="InterPro" id="IPR009008">
    <property type="entry name" value="Val/Leu/Ile-tRNA-synth_edit"/>
</dbReference>
<dbReference type="NCBIfam" id="TIGR00396">
    <property type="entry name" value="leuS_bact"/>
    <property type="match status" value="1"/>
</dbReference>
<dbReference type="PANTHER" id="PTHR43740:SF2">
    <property type="entry name" value="LEUCINE--TRNA LIGASE, MITOCHONDRIAL"/>
    <property type="match status" value="1"/>
</dbReference>
<dbReference type="PANTHER" id="PTHR43740">
    <property type="entry name" value="LEUCYL-TRNA SYNTHETASE"/>
    <property type="match status" value="1"/>
</dbReference>
<dbReference type="Pfam" id="PF08264">
    <property type="entry name" value="Anticodon_1"/>
    <property type="match status" value="1"/>
</dbReference>
<dbReference type="Pfam" id="PF00133">
    <property type="entry name" value="tRNA-synt_1"/>
    <property type="match status" value="2"/>
</dbReference>
<dbReference type="Pfam" id="PF13603">
    <property type="entry name" value="tRNA-synt_1_2"/>
    <property type="match status" value="1"/>
</dbReference>
<dbReference type="Pfam" id="PF09334">
    <property type="entry name" value="tRNA-synt_1g"/>
    <property type="match status" value="1"/>
</dbReference>
<dbReference type="PRINTS" id="PR00985">
    <property type="entry name" value="TRNASYNTHLEU"/>
</dbReference>
<dbReference type="SUPFAM" id="SSF47323">
    <property type="entry name" value="Anticodon-binding domain of a subclass of class I aminoacyl-tRNA synthetases"/>
    <property type="match status" value="1"/>
</dbReference>
<dbReference type="SUPFAM" id="SSF52374">
    <property type="entry name" value="Nucleotidylyl transferase"/>
    <property type="match status" value="1"/>
</dbReference>
<dbReference type="SUPFAM" id="SSF50677">
    <property type="entry name" value="ValRS/IleRS/LeuRS editing domain"/>
    <property type="match status" value="1"/>
</dbReference>
<dbReference type="PROSITE" id="PS00178">
    <property type="entry name" value="AA_TRNA_LIGASE_I"/>
    <property type="match status" value="1"/>
</dbReference>
<proteinExistence type="inferred from homology"/>
<name>SYL_ACTSZ</name>
<reference key="1">
    <citation type="journal article" date="2010" name="BMC Genomics">
        <title>A genomic perspective on the potential of Actinobacillus succinogenes for industrial succinate production.</title>
        <authorList>
            <person name="McKinlay J.B."/>
            <person name="Laivenieks M."/>
            <person name="Schindler B.D."/>
            <person name="McKinlay A.A."/>
            <person name="Siddaramappa S."/>
            <person name="Challacombe J.F."/>
            <person name="Lowry S.R."/>
            <person name="Clum A."/>
            <person name="Lapidus A.L."/>
            <person name="Burkhart K.B."/>
            <person name="Harkins V."/>
            <person name="Vieille C."/>
        </authorList>
    </citation>
    <scope>NUCLEOTIDE SEQUENCE [LARGE SCALE GENOMIC DNA]</scope>
    <source>
        <strain>ATCC 55618 / DSM 22257 / CCUG 43843 / 130Z</strain>
    </source>
</reference>
<feature type="chain" id="PRO_1000071107" description="Leucine--tRNA ligase">
    <location>
        <begin position="1"/>
        <end position="860"/>
    </location>
</feature>
<feature type="short sequence motif" description="'HIGH' region">
    <location>
        <begin position="42"/>
        <end position="52"/>
    </location>
</feature>
<feature type="short sequence motif" description="'KMSKS' region">
    <location>
        <begin position="619"/>
        <end position="623"/>
    </location>
</feature>
<feature type="binding site" evidence="1">
    <location>
        <position position="622"/>
    </location>
    <ligand>
        <name>ATP</name>
        <dbReference type="ChEBI" id="CHEBI:30616"/>
    </ligand>
</feature>
<keyword id="KW-0030">Aminoacyl-tRNA synthetase</keyword>
<keyword id="KW-0067">ATP-binding</keyword>
<keyword id="KW-0963">Cytoplasm</keyword>
<keyword id="KW-0436">Ligase</keyword>
<keyword id="KW-0547">Nucleotide-binding</keyword>
<keyword id="KW-0648">Protein biosynthesis</keyword>
<keyword id="KW-1185">Reference proteome</keyword>